<comment type="function">
    <text evidence="1">Catalyzes the attachment of threonine to tRNA(Thr) in a two-step reaction: L-threonine is first activated by ATP to form Thr-AMP and then transferred to the acceptor end of tRNA(Thr). Also edits incorrectly charged L-seryl-tRNA(Thr).</text>
</comment>
<comment type="catalytic activity">
    <reaction evidence="1">
        <text>tRNA(Thr) + L-threonine + ATP = L-threonyl-tRNA(Thr) + AMP + diphosphate + H(+)</text>
        <dbReference type="Rhea" id="RHEA:24624"/>
        <dbReference type="Rhea" id="RHEA-COMP:9670"/>
        <dbReference type="Rhea" id="RHEA-COMP:9704"/>
        <dbReference type="ChEBI" id="CHEBI:15378"/>
        <dbReference type="ChEBI" id="CHEBI:30616"/>
        <dbReference type="ChEBI" id="CHEBI:33019"/>
        <dbReference type="ChEBI" id="CHEBI:57926"/>
        <dbReference type="ChEBI" id="CHEBI:78442"/>
        <dbReference type="ChEBI" id="CHEBI:78534"/>
        <dbReference type="ChEBI" id="CHEBI:456215"/>
        <dbReference type="EC" id="6.1.1.3"/>
    </reaction>
</comment>
<comment type="cofactor">
    <cofactor evidence="1">
        <name>Zn(2+)</name>
        <dbReference type="ChEBI" id="CHEBI:29105"/>
    </cofactor>
    <text evidence="1">Binds 1 zinc ion per subunit.</text>
</comment>
<comment type="subunit">
    <text evidence="1">Homodimer.</text>
</comment>
<comment type="subcellular location">
    <subcellularLocation>
        <location evidence="1">Cytoplasm</location>
    </subcellularLocation>
</comment>
<comment type="similarity">
    <text evidence="1">Belongs to the class-II aminoacyl-tRNA synthetase family.</text>
</comment>
<sequence length="642" mass="73994">MPVITLPDGSQRHYDHPVSPMDVALDIGPGLAKATIAGRVNGELVDASDLIENDATLSIITAKDEEGLEIIRHSCAHLLGHAIKQLWPHTKMAIGPVVDNGFYYDVDLDRTLTQEDVEALEKRMHELAEKNYDVIKKKVSWHEARETFVKRGESYKVSILDENIAHDDKPGLYHHEEYVDMCRGPHVPNMRFCHHFKLMKTAGAYWRGDSNNKMLQRIYGTAWADKKALNAYLQRLEEAAKRDHRKIGKQLDLYHMQEEAPGMVFWHNDGWTIFRELEVFVRSKLKEYQYQEVKGPFMMDRVLWEKTGHWDNYKDAMFTTSSENREYCIKPMNCPGHVQIFNQGLKSYRDLPLRMAEFGSCHRNEPSGALHGLMRVRGFTQDDAHIFCTEEQIRDEVNACIRMVYDMYSTFGFEKIVVKLSTRPDKRIGSDEMWDRAEADLAVALEENNIPFEYQLGEGAFYGPKIEFTLYDCLDRAWQCGTVQLDFSLPSRLSASYVGEDNERKVPVMIHRAILGSMERFIGILTEEFAGFFPTWLAPVQVVVMNITDSQSEYVNELTQKLQNAGIRVKADLRNEKIGFKIREHTLRRVPYMLVCGDKEVEAGKVAVRTRRGKDLGSLDVNDVIEKLQQEIRSRSLQQLEE</sequence>
<accession>B5F7G2</accession>
<feature type="chain" id="PRO_1000098605" description="Threonine--tRNA ligase">
    <location>
        <begin position="1"/>
        <end position="642"/>
    </location>
</feature>
<feature type="domain" description="TGS" evidence="2">
    <location>
        <begin position="1"/>
        <end position="61"/>
    </location>
</feature>
<feature type="region of interest" description="Catalytic" evidence="1">
    <location>
        <begin position="243"/>
        <end position="534"/>
    </location>
</feature>
<feature type="binding site" evidence="1">
    <location>
        <position position="334"/>
    </location>
    <ligand>
        <name>Zn(2+)</name>
        <dbReference type="ChEBI" id="CHEBI:29105"/>
    </ligand>
</feature>
<feature type="binding site" evidence="1">
    <location>
        <position position="385"/>
    </location>
    <ligand>
        <name>Zn(2+)</name>
        <dbReference type="ChEBI" id="CHEBI:29105"/>
    </ligand>
</feature>
<feature type="binding site" evidence="1">
    <location>
        <position position="511"/>
    </location>
    <ligand>
        <name>Zn(2+)</name>
        <dbReference type="ChEBI" id="CHEBI:29105"/>
    </ligand>
</feature>
<name>SYT_SALA4</name>
<keyword id="KW-0030">Aminoacyl-tRNA synthetase</keyword>
<keyword id="KW-0067">ATP-binding</keyword>
<keyword id="KW-0963">Cytoplasm</keyword>
<keyword id="KW-0436">Ligase</keyword>
<keyword id="KW-0479">Metal-binding</keyword>
<keyword id="KW-0547">Nucleotide-binding</keyword>
<keyword id="KW-0648">Protein biosynthesis</keyword>
<keyword id="KW-0694">RNA-binding</keyword>
<keyword id="KW-0820">tRNA-binding</keyword>
<keyword id="KW-0862">Zinc</keyword>
<protein>
    <recommendedName>
        <fullName evidence="1">Threonine--tRNA ligase</fullName>
        <ecNumber evidence="1">6.1.1.3</ecNumber>
    </recommendedName>
    <alternativeName>
        <fullName evidence="1">Threonyl-tRNA synthetase</fullName>
        <shortName evidence="1">ThrRS</shortName>
    </alternativeName>
</protein>
<dbReference type="EC" id="6.1.1.3" evidence="1"/>
<dbReference type="EMBL" id="CP001138">
    <property type="protein sequence ID" value="ACH52650.1"/>
    <property type="molecule type" value="Genomic_DNA"/>
</dbReference>
<dbReference type="RefSeq" id="WP_001144226.1">
    <property type="nucleotide sequence ID" value="NC_011149.1"/>
</dbReference>
<dbReference type="SMR" id="B5F7G2"/>
<dbReference type="KEGG" id="sea:SeAg_B1840"/>
<dbReference type="HOGENOM" id="CLU_008554_0_1_6"/>
<dbReference type="Proteomes" id="UP000008819">
    <property type="component" value="Chromosome"/>
</dbReference>
<dbReference type="GO" id="GO:0005829">
    <property type="term" value="C:cytosol"/>
    <property type="evidence" value="ECO:0007669"/>
    <property type="project" value="TreeGrafter"/>
</dbReference>
<dbReference type="GO" id="GO:0005524">
    <property type="term" value="F:ATP binding"/>
    <property type="evidence" value="ECO:0007669"/>
    <property type="project" value="UniProtKB-UniRule"/>
</dbReference>
<dbReference type="GO" id="GO:0046872">
    <property type="term" value="F:metal ion binding"/>
    <property type="evidence" value="ECO:0007669"/>
    <property type="project" value="UniProtKB-KW"/>
</dbReference>
<dbReference type="GO" id="GO:0004829">
    <property type="term" value="F:threonine-tRNA ligase activity"/>
    <property type="evidence" value="ECO:0007669"/>
    <property type="project" value="UniProtKB-UniRule"/>
</dbReference>
<dbReference type="GO" id="GO:0000049">
    <property type="term" value="F:tRNA binding"/>
    <property type="evidence" value="ECO:0007669"/>
    <property type="project" value="UniProtKB-KW"/>
</dbReference>
<dbReference type="GO" id="GO:0006435">
    <property type="term" value="P:threonyl-tRNA aminoacylation"/>
    <property type="evidence" value="ECO:0007669"/>
    <property type="project" value="UniProtKB-UniRule"/>
</dbReference>
<dbReference type="CDD" id="cd01667">
    <property type="entry name" value="TGS_ThrRS"/>
    <property type="match status" value="1"/>
</dbReference>
<dbReference type="CDD" id="cd00860">
    <property type="entry name" value="ThrRS_anticodon"/>
    <property type="match status" value="1"/>
</dbReference>
<dbReference type="CDD" id="cd00771">
    <property type="entry name" value="ThrRS_core"/>
    <property type="match status" value="1"/>
</dbReference>
<dbReference type="FunFam" id="3.10.20.30:FF:000005">
    <property type="entry name" value="Threonine--tRNA ligase"/>
    <property type="match status" value="1"/>
</dbReference>
<dbReference type="FunFam" id="3.30.54.20:FF:000002">
    <property type="entry name" value="Threonine--tRNA ligase"/>
    <property type="match status" value="1"/>
</dbReference>
<dbReference type="FunFam" id="3.30.930.10:FF:000002">
    <property type="entry name" value="Threonine--tRNA ligase"/>
    <property type="match status" value="1"/>
</dbReference>
<dbReference type="FunFam" id="3.40.50.800:FF:000001">
    <property type="entry name" value="Threonine--tRNA ligase"/>
    <property type="match status" value="1"/>
</dbReference>
<dbReference type="FunFam" id="3.30.980.10:FF:000005">
    <property type="entry name" value="Threonyl-tRNA synthetase, mitochondrial"/>
    <property type="match status" value="1"/>
</dbReference>
<dbReference type="Gene3D" id="3.10.20.30">
    <property type="match status" value="1"/>
</dbReference>
<dbReference type="Gene3D" id="3.30.54.20">
    <property type="match status" value="1"/>
</dbReference>
<dbReference type="Gene3D" id="3.40.50.800">
    <property type="entry name" value="Anticodon-binding domain"/>
    <property type="match status" value="1"/>
</dbReference>
<dbReference type="Gene3D" id="3.30.930.10">
    <property type="entry name" value="Bira Bifunctional Protein, Domain 2"/>
    <property type="match status" value="1"/>
</dbReference>
<dbReference type="Gene3D" id="3.30.980.10">
    <property type="entry name" value="Threonyl-trna Synthetase, Chain A, domain 2"/>
    <property type="match status" value="1"/>
</dbReference>
<dbReference type="HAMAP" id="MF_00184">
    <property type="entry name" value="Thr_tRNA_synth"/>
    <property type="match status" value="1"/>
</dbReference>
<dbReference type="InterPro" id="IPR002314">
    <property type="entry name" value="aa-tRNA-synt_IIb"/>
</dbReference>
<dbReference type="InterPro" id="IPR006195">
    <property type="entry name" value="aa-tRNA-synth_II"/>
</dbReference>
<dbReference type="InterPro" id="IPR045864">
    <property type="entry name" value="aa-tRNA-synth_II/BPL/LPL"/>
</dbReference>
<dbReference type="InterPro" id="IPR004154">
    <property type="entry name" value="Anticodon-bd"/>
</dbReference>
<dbReference type="InterPro" id="IPR036621">
    <property type="entry name" value="Anticodon-bd_dom_sf"/>
</dbReference>
<dbReference type="InterPro" id="IPR012675">
    <property type="entry name" value="Beta-grasp_dom_sf"/>
</dbReference>
<dbReference type="InterPro" id="IPR004095">
    <property type="entry name" value="TGS"/>
</dbReference>
<dbReference type="InterPro" id="IPR012676">
    <property type="entry name" value="TGS-like"/>
</dbReference>
<dbReference type="InterPro" id="IPR002320">
    <property type="entry name" value="Thr-tRNA-ligase_IIa"/>
</dbReference>
<dbReference type="InterPro" id="IPR018163">
    <property type="entry name" value="Thr/Ala-tRNA-synth_IIc_edit"/>
</dbReference>
<dbReference type="InterPro" id="IPR047246">
    <property type="entry name" value="ThrRS_anticodon"/>
</dbReference>
<dbReference type="InterPro" id="IPR033728">
    <property type="entry name" value="ThrRS_core"/>
</dbReference>
<dbReference type="InterPro" id="IPR012947">
    <property type="entry name" value="tRNA_SAD"/>
</dbReference>
<dbReference type="NCBIfam" id="TIGR00418">
    <property type="entry name" value="thrS"/>
    <property type="match status" value="1"/>
</dbReference>
<dbReference type="PANTHER" id="PTHR11451:SF44">
    <property type="entry name" value="THREONINE--TRNA LIGASE, CHLOROPLASTIC_MITOCHONDRIAL 2"/>
    <property type="match status" value="1"/>
</dbReference>
<dbReference type="PANTHER" id="PTHR11451">
    <property type="entry name" value="THREONINE-TRNA LIGASE"/>
    <property type="match status" value="1"/>
</dbReference>
<dbReference type="Pfam" id="PF03129">
    <property type="entry name" value="HGTP_anticodon"/>
    <property type="match status" value="1"/>
</dbReference>
<dbReference type="Pfam" id="PF02824">
    <property type="entry name" value="TGS"/>
    <property type="match status" value="1"/>
</dbReference>
<dbReference type="Pfam" id="PF00587">
    <property type="entry name" value="tRNA-synt_2b"/>
    <property type="match status" value="1"/>
</dbReference>
<dbReference type="Pfam" id="PF07973">
    <property type="entry name" value="tRNA_SAD"/>
    <property type="match status" value="1"/>
</dbReference>
<dbReference type="PRINTS" id="PR01047">
    <property type="entry name" value="TRNASYNTHTHR"/>
</dbReference>
<dbReference type="SMART" id="SM00863">
    <property type="entry name" value="tRNA_SAD"/>
    <property type="match status" value="1"/>
</dbReference>
<dbReference type="SUPFAM" id="SSF52954">
    <property type="entry name" value="Class II aaRS ABD-related"/>
    <property type="match status" value="1"/>
</dbReference>
<dbReference type="SUPFAM" id="SSF55681">
    <property type="entry name" value="Class II aaRS and biotin synthetases"/>
    <property type="match status" value="1"/>
</dbReference>
<dbReference type="SUPFAM" id="SSF81271">
    <property type="entry name" value="TGS-like"/>
    <property type="match status" value="1"/>
</dbReference>
<dbReference type="SUPFAM" id="SSF55186">
    <property type="entry name" value="ThrRS/AlaRS common domain"/>
    <property type="match status" value="1"/>
</dbReference>
<dbReference type="PROSITE" id="PS50862">
    <property type="entry name" value="AA_TRNA_LIGASE_II"/>
    <property type="match status" value="1"/>
</dbReference>
<dbReference type="PROSITE" id="PS51880">
    <property type="entry name" value="TGS"/>
    <property type="match status" value="1"/>
</dbReference>
<reference key="1">
    <citation type="journal article" date="2011" name="J. Bacteriol.">
        <title>Comparative genomics of 28 Salmonella enterica isolates: evidence for CRISPR-mediated adaptive sublineage evolution.</title>
        <authorList>
            <person name="Fricke W.F."/>
            <person name="Mammel M.K."/>
            <person name="McDermott P.F."/>
            <person name="Tartera C."/>
            <person name="White D.G."/>
            <person name="Leclerc J.E."/>
            <person name="Ravel J."/>
            <person name="Cebula T.A."/>
        </authorList>
    </citation>
    <scope>NUCLEOTIDE SEQUENCE [LARGE SCALE GENOMIC DNA]</scope>
    <source>
        <strain>SL483</strain>
    </source>
</reference>
<organism>
    <name type="scientific">Salmonella agona (strain SL483)</name>
    <dbReference type="NCBI Taxonomy" id="454166"/>
    <lineage>
        <taxon>Bacteria</taxon>
        <taxon>Pseudomonadati</taxon>
        <taxon>Pseudomonadota</taxon>
        <taxon>Gammaproteobacteria</taxon>
        <taxon>Enterobacterales</taxon>
        <taxon>Enterobacteriaceae</taxon>
        <taxon>Salmonella</taxon>
    </lineage>
</organism>
<gene>
    <name evidence="1" type="primary">thrS</name>
    <name type="ordered locus">SeAg_B1840</name>
</gene>
<evidence type="ECO:0000255" key="1">
    <source>
        <dbReference type="HAMAP-Rule" id="MF_00184"/>
    </source>
</evidence>
<evidence type="ECO:0000255" key="2">
    <source>
        <dbReference type="PROSITE-ProRule" id="PRU01228"/>
    </source>
</evidence>
<proteinExistence type="inferred from homology"/>